<feature type="chain" id="PRO_0000234598" description="Zinc finger protein 614">
    <location>
        <begin position="1"/>
        <end position="585"/>
    </location>
</feature>
<feature type="domain" description="KRAB" evidence="2">
    <location>
        <begin position="8"/>
        <end position="79"/>
    </location>
</feature>
<feature type="zinc finger region" description="C2H2-type 1; atypical" evidence="1">
    <location>
        <begin position="205"/>
        <end position="227"/>
    </location>
</feature>
<feature type="zinc finger region" description="C2H2-type 2; degenerate" evidence="1">
    <location>
        <begin position="257"/>
        <end position="281"/>
    </location>
</feature>
<feature type="zinc finger region" description="C2H2-type 3" evidence="1">
    <location>
        <begin position="287"/>
        <end position="309"/>
    </location>
</feature>
<feature type="zinc finger region" description="C2H2-type 4" evidence="1">
    <location>
        <begin position="315"/>
        <end position="337"/>
    </location>
</feature>
<feature type="zinc finger region" description="C2H2-type 5" evidence="1">
    <location>
        <begin position="343"/>
        <end position="365"/>
    </location>
</feature>
<feature type="zinc finger region" description="C2H2-type 6" evidence="1">
    <location>
        <begin position="371"/>
        <end position="393"/>
    </location>
</feature>
<feature type="zinc finger region" description="C2H2-type 7" evidence="1">
    <location>
        <begin position="399"/>
        <end position="421"/>
    </location>
</feature>
<feature type="zinc finger region" description="C2H2-type 8" evidence="1">
    <location>
        <begin position="427"/>
        <end position="449"/>
    </location>
</feature>
<feature type="zinc finger region" description="C2H2-type 9" evidence="1">
    <location>
        <begin position="455"/>
        <end position="477"/>
    </location>
</feature>
<feature type="zinc finger region" description="C2H2-type 10" evidence="1">
    <location>
        <begin position="483"/>
        <end position="505"/>
    </location>
</feature>
<feature type="zinc finger region" description="C2H2-type 11" evidence="1">
    <location>
        <begin position="511"/>
        <end position="533"/>
    </location>
</feature>
<feature type="zinc finger region" description="C2H2-type 12" evidence="1">
    <location>
        <begin position="539"/>
        <end position="561"/>
    </location>
</feature>
<feature type="splice variant" id="VSP_056549" description="In isoform 2." evidence="3">
    <original>GEKTLLHGKHERTHTKTRFSENAKCIHTKFQVFKHQRT</original>
    <variation>ETGSLERPRQADHLRSEVQDQPGQRGETLCLLKIHTKN</variation>
    <location>
        <begin position="161"/>
        <end position="198"/>
    </location>
</feature>
<feature type="splice variant" id="VSP_056550" description="In isoform 2." evidence="3">
    <location>
        <begin position="199"/>
        <end position="585"/>
    </location>
</feature>
<feature type="sequence variant" id="VAR_052878" description="In dbSNP:rs9636139.">
    <original>T</original>
    <variation>I</variation>
    <location>
        <position position="68"/>
    </location>
</feature>
<feature type="sequence variant" id="VAR_061959" description="In dbSNP:rs45596739.">
    <original>G</original>
    <variation>E</variation>
    <location>
        <position position="160"/>
    </location>
</feature>
<feature type="sequence variant" id="VAR_052879" description="In dbSNP:rs35098634.">
    <original>H</original>
    <variation>R</variation>
    <location>
        <position position="223"/>
    </location>
</feature>
<feature type="sequence variant" id="VAR_052880" description="In dbSNP:rs8104890.">
    <original>V</original>
    <variation>I</variation>
    <location>
        <position position="415"/>
    </location>
</feature>
<feature type="sequence conflict" description="In Ref. 1; BAC04966." evidence="4" ref="1">
    <original>L</original>
    <variation>P</variation>
    <location>
        <position position="250"/>
    </location>
</feature>
<protein>
    <recommendedName>
        <fullName>Zinc finger protein 614</fullName>
    </recommendedName>
</protein>
<name>ZN614_HUMAN</name>
<dbReference type="EMBL" id="AK097156">
    <property type="protein sequence ID" value="BAC04966.1"/>
    <property type="molecule type" value="mRNA"/>
</dbReference>
<dbReference type="EMBL" id="AC011468">
    <property type="status" value="NOT_ANNOTATED_CDS"/>
    <property type="molecule type" value="Genomic_DNA"/>
</dbReference>
<dbReference type="EMBL" id="CH471135">
    <property type="protein sequence ID" value="EAW72058.1"/>
    <property type="molecule type" value="Genomic_DNA"/>
</dbReference>
<dbReference type="EMBL" id="BC004930">
    <property type="protein sequence ID" value="AAH04930.1"/>
    <property type="molecule type" value="mRNA"/>
</dbReference>
<dbReference type="EMBL" id="BC022246">
    <property type="protein sequence ID" value="AAH22246.1"/>
    <property type="molecule type" value="mRNA"/>
</dbReference>
<dbReference type="EMBL" id="BC101392">
    <property type="protein sequence ID" value="AAI01393.1"/>
    <property type="molecule type" value="mRNA"/>
</dbReference>
<dbReference type="EMBL" id="BC101393">
    <property type="protein sequence ID" value="AAI01394.1"/>
    <property type="molecule type" value="mRNA"/>
</dbReference>
<dbReference type="EMBL" id="BC101394">
    <property type="protein sequence ID" value="AAI01395.1"/>
    <property type="molecule type" value="mRNA"/>
</dbReference>
<dbReference type="EMBL" id="BC101395">
    <property type="protein sequence ID" value="AAI01396.1"/>
    <property type="molecule type" value="mRNA"/>
</dbReference>
<dbReference type="CCDS" id="CCDS12847.1">
    <molecule id="Q8N883-1"/>
</dbReference>
<dbReference type="RefSeq" id="NP_079316.2">
    <molecule id="Q8N883-1"/>
    <property type="nucleotide sequence ID" value="NM_025040.3"/>
</dbReference>
<dbReference type="SMR" id="Q8N883"/>
<dbReference type="BioGRID" id="123116">
    <property type="interactions" value="8"/>
</dbReference>
<dbReference type="FunCoup" id="Q8N883">
    <property type="interactions" value="9"/>
</dbReference>
<dbReference type="IntAct" id="Q8N883">
    <property type="interactions" value="25"/>
</dbReference>
<dbReference type="MINT" id="Q8N883"/>
<dbReference type="STRING" id="9606.ENSP00000270649"/>
<dbReference type="CarbonylDB" id="Q8N883"/>
<dbReference type="iPTMnet" id="Q8N883"/>
<dbReference type="PhosphoSitePlus" id="Q8N883"/>
<dbReference type="BioMuta" id="ZNF614"/>
<dbReference type="DMDM" id="97219309"/>
<dbReference type="jPOST" id="Q8N883"/>
<dbReference type="MassIVE" id="Q8N883"/>
<dbReference type="PaxDb" id="9606-ENSP00000270649"/>
<dbReference type="PeptideAtlas" id="Q8N883"/>
<dbReference type="ProteomicsDB" id="72381">
    <molecule id="Q8N883-1"/>
</dbReference>
<dbReference type="ProteomicsDB" id="78918"/>
<dbReference type="Pumba" id="Q8N883"/>
<dbReference type="Antibodypedia" id="21569">
    <property type="antibodies" value="127 antibodies from 16 providers"/>
</dbReference>
<dbReference type="DNASU" id="80110"/>
<dbReference type="Ensembl" id="ENST00000270649.11">
    <molecule id="Q8N883-1"/>
    <property type="protein sequence ID" value="ENSP00000270649.5"/>
    <property type="gene ID" value="ENSG00000142556.19"/>
</dbReference>
<dbReference type="Ensembl" id="ENST00000356322.10">
    <molecule id="Q8N883-2"/>
    <property type="protein sequence ID" value="ENSP00000348674.5"/>
    <property type="gene ID" value="ENSG00000142556.19"/>
</dbReference>
<dbReference type="GeneID" id="80110"/>
<dbReference type="KEGG" id="hsa:80110"/>
<dbReference type="MANE-Select" id="ENST00000270649.11">
    <property type="protein sequence ID" value="ENSP00000270649.5"/>
    <property type="RefSeq nucleotide sequence ID" value="NM_025040.4"/>
    <property type="RefSeq protein sequence ID" value="NP_079316.2"/>
</dbReference>
<dbReference type="UCSC" id="uc002pyi.5">
    <molecule id="Q8N883-1"/>
    <property type="organism name" value="human"/>
</dbReference>
<dbReference type="AGR" id="HGNC:24722"/>
<dbReference type="CTD" id="80110"/>
<dbReference type="GeneCards" id="ZNF614"/>
<dbReference type="HGNC" id="HGNC:24722">
    <property type="gene designation" value="ZNF614"/>
</dbReference>
<dbReference type="HPA" id="ENSG00000142556">
    <property type="expression patterns" value="Low tissue specificity"/>
</dbReference>
<dbReference type="neXtProt" id="NX_Q8N883"/>
<dbReference type="OpenTargets" id="ENSG00000142556"/>
<dbReference type="PharmGKB" id="PA134914044"/>
<dbReference type="VEuPathDB" id="HostDB:ENSG00000142556"/>
<dbReference type="eggNOG" id="KOG1721">
    <property type="taxonomic scope" value="Eukaryota"/>
</dbReference>
<dbReference type="GeneTree" id="ENSGT00940000162748"/>
<dbReference type="HOGENOM" id="CLU_002678_69_0_1"/>
<dbReference type="InParanoid" id="Q8N883"/>
<dbReference type="OMA" id="NTTDKIC"/>
<dbReference type="OrthoDB" id="8117402at2759"/>
<dbReference type="PAN-GO" id="Q8N883">
    <property type="GO annotations" value="3 GO annotations based on evolutionary models"/>
</dbReference>
<dbReference type="PhylomeDB" id="Q8N883"/>
<dbReference type="TreeFam" id="TF350804"/>
<dbReference type="PathwayCommons" id="Q8N883"/>
<dbReference type="Reactome" id="R-HSA-212436">
    <property type="pathway name" value="Generic Transcription Pathway"/>
</dbReference>
<dbReference type="SignaLink" id="Q8N883"/>
<dbReference type="BioGRID-ORCS" id="80110">
    <property type="hits" value="11 hits in 1174 CRISPR screens"/>
</dbReference>
<dbReference type="GenomeRNAi" id="80110"/>
<dbReference type="Pharos" id="Q8N883">
    <property type="development level" value="Tdark"/>
</dbReference>
<dbReference type="PRO" id="PR:Q8N883"/>
<dbReference type="Proteomes" id="UP000005640">
    <property type="component" value="Chromosome 19"/>
</dbReference>
<dbReference type="RNAct" id="Q8N883">
    <property type="molecule type" value="protein"/>
</dbReference>
<dbReference type="Bgee" id="ENSG00000142556">
    <property type="expression patterns" value="Expressed in buccal mucosa cell and 166 other cell types or tissues"/>
</dbReference>
<dbReference type="ExpressionAtlas" id="Q8N883">
    <property type="expression patterns" value="baseline and differential"/>
</dbReference>
<dbReference type="GO" id="GO:0005634">
    <property type="term" value="C:nucleus"/>
    <property type="evidence" value="ECO:0000318"/>
    <property type="project" value="GO_Central"/>
</dbReference>
<dbReference type="GO" id="GO:0000981">
    <property type="term" value="F:DNA-binding transcription factor activity, RNA polymerase II-specific"/>
    <property type="evidence" value="ECO:0000318"/>
    <property type="project" value="GO_Central"/>
</dbReference>
<dbReference type="GO" id="GO:0000977">
    <property type="term" value="F:RNA polymerase II transcription regulatory region sequence-specific DNA binding"/>
    <property type="evidence" value="ECO:0000318"/>
    <property type="project" value="GO_Central"/>
</dbReference>
<dbReference type="GO" id="GO:0008270">
    <property type="term" value="F:zinc ion binding"/>
    <property type="evidence" value="ECO:0007669"/>
    <property type="project" value="UniProtKB-KW"/>
</dbReference>
<dbReference type="GO" id="GO:0006357">
    <property type="term" value="P:regulation of transcription by RNA polymerase II"/>
    <property type="evidence" value="ECO:0000318"/>
    <property type="project" value="GO_Central"/>
</dbReference>
<dbReference type="CDD" id="cd07765">
    <property type="entry name" value="KRAB_A-box"/>
    <property type="match status" value="1"/>
</dbReference>
<dbReference type="FunFam" id="3.30.160.60:FF:003178">
    <property type="match status" value="3"/>
</dbReference>
<dbReference type="FunFam" id="3.30.160.60:FF:000029">
    <property type="entry name" value="GLI family zinc finger 4"/>
    <property type="match status" value="1"/>
</dbReference>
<dbReference type="FunFam" id="3.30.160.60:FF:000601">
    <property type="entry name" value="Histone-lysine N-methyltransferase PRDM9"/>
    <property type="match status" value="1"/>
</dbReference>
<dbReference type="FunFam" id="3.30.160.60:FF:000555">
    <property type="entry name" value="Zinc finger protein 1 homolog"/>
    <property type="match status" value="1"/>
</dbReference>
<dbReference type="FunFam" id="3.30.160.60:FF:000478">
    <property type="entry name" value="Zinc finger protein 133"/>
    <property type="match status" value="1"/>
</dbReference>
<dbReference type="FunFam" id="3.30.160.60:FF:002343">
    <property type="entry name" value="Zinc finger protein 33A"/>
    <property type="match status" value="1"/>
</dbReference>
<dbReference type="FunFam" id="3.30.160.60:FF:001173">
    <property type="entry name" value="Zinc finger protein 613"/>
    <property type="match status" value="1"/>
</dbReference>
<dbReference type="FunFam" id="3.30.160.60:FF:001672">
    <property type="entry name" value="Zinc finger protein 614"/>
    <property type="match status" value="1"/>
</dbReference>
<dbReference type="FunFam" id="3.30.160.60:FF:000495">
    <property type="entry name" value="zinc finger protein 668"/>
    <property type="match status" value="1"/>
</dbReference>
<dbReference type="Gene3D" id="6.10.140.140">
    <property type="match status" value="1"/>
</dbReference>
<dbReference type="Gene3D" id="3.30.160.60">
    <property type="entry name" value="Classic Zinc Finger"/>
    <property type="match status" value="11"/>
</dbReference>
<dbReference type="InterPro" id="IPR050752">
    <property type="entry name" value="C2H2-ZF_domain"/>
</dbReference>
<dbReference type="InterPro" id="IPR001909">
    <property type="entry name" value="KRAB"/>
</dbReference>
<dbReference type="InterPro" id="IPR036051">
    <property type="entry name" value="KRAB_dom_sf"/>
</dbReference>
<dbReference type="InterPro" id="IPR036236">
    <property type="entry name" value="Znf_C2H2_sf"/>
</dbReference>
<dbReference type="InterPro" id="IPR013087">
    <property type="entry name" value="Znf_C2H2_type"/>
</dbReference>
<dbReference type="PANTHER" id="PTHR24384">
    <property type="entry name" value="FINGER PUTATIVE TRANSCRIPTION FACTOR FAMILY-RELATED"/>
    <property type="match status" value="1"/>
</dbReference>
<dbReference type="PANTHER" id="PTHR24384:SF242">
    <property type="entry name" value="ZINC FINGER PROTEIN 628"/>
    <property type="match status" value="1"/>
</dbReference>
<dbReference type="Pfam" id="PF01352">
    <property type="entry name" value="KRAB"/>
    <property type="match status" value="1"/>
</dbReference>
<dbReference type="Pfam" id="PF00096">
    <property type="entry name" value="zf-C2H2"/>
    <property type="match status" value="10"/>
</dbReference>
<dbReference type="SMART" id="SM00349">
    <property type="entry name" value="KRAB"/>
    <property type="match status" value="1"/>
</dbReference>
<dbReference type="SMART" id="SM00355">
    <property type="entry name" value="ZnF_C2H2"/>
    <property type="match status" value="11"/>
</dbReference>
<dbReference type="SUPFAM" id="SSF57667">
    <property type="entry name" value="beta-beta-alpha zinc fingers"/>
    <property type="match status" value="7"/>
</dbReference>
<dbReference type="SUPFAM" id="SSF109640">
    <property type="entry name" value="KRAB domain (Kruppel-associated box)"/>
    <property type="match status" value="1"/>
</dbReference>
<dbReference type="PROSITE" id="PS50805">
    <property type="entry name" value="KRAB"/>
    <property type="match status" value="1"/>
</dbReference>
<dbReference type="PROSITE" id="PS00028">
    <property type="entry name" value="ZINC_FINGER_C2H2_1"/>
    <property type="match status" value="10"/>
</dbReference>
<dbReference type="PROSITE" id="PS50157">
    <property type="entry name" value="ZINC_FINGER_C2H2_2"/>
    <property type="match status" value="11"/>
</dbReference>
<comment type="function">
    <text>May be involved in transcriptional regulation.</text>
</comment>
<comment type="interaction">
    <interactant intactId="EBI-9675993">
        <id>Q8N883</id>
    </interactant>
    <interactant intactId="EBI-10175124">
        <id>Q8IZU0</id>
        <label>FAM9B</label>
    </interactant>
    <organismsDiffer>false</organismsDiffer>
    <experiments>3</experiments>
</comment>
<comment type="interaction">
    <interactant intactId="EBI-9675993">
        <id>Q8N883</id>
    </interactant>
    <interactant intactId="EBI-8476987">
        <id>Q14938</id>
        <label>NFIX</label>
    </interactant>
    <organismsDiffer>false</organismsDiffer>
    <experiments>3</experiments>
</comment>
<comment type="interaction">
    <interactant intactId="EBI-9675993">
        <id>Q8N883</id>
    </interactant>
    <interactant intactId="EBI-9675698">
        <id>P14079</id>
        <label>tax</label>
    </interactant>
    <organismsDiffer>true</organismsDiffer>
    <experiments>3</experiments>
</comment>
<comment type="subcellular location">
    <subcellularLocation>
        <location evidence="4">Nucleus</location>
    </subcellularLocation>
</comment>
<comment type="alternative products">
    <event type="alternative splicing"/>
    <isoform>
        <id>Q8N883-1</id>
        <name>1</name>
        <sequence type="displayed"/>
    </isoform>
    <isoform>
        <id>Q8N883-2</id>
        <name>2</name>
        <sequence type="described" ref="VSP_056549 VSP_056550"/>
    </isoform>
</comment>
<comment type="similarity">
    <text evidence="4">Belongs to the krueppel C2H2-type zinc-finger protein family.</text>
</comment>
<accession>Q8N883</accession>
<accession>Q494T8</accession>
<accession>Q8TCF4</accession>
<accession>Q9BSN8</accession>
<sequence>MIKTQESLTLEDVAVEFSWEEWQLLDTAQKNLYRDVMVENYNHLVSLGYQTSKPDVLSKLAHGQEPWTTDAKIQNKNCPGIGKVDSHLQEHSPNQRLLKSVQQCNGQNTLRNIVHLSKTHFPIVQNHDTFDLYRKNLKSSLSLINQKRRHGINNPVEFIGGEKTLLHGKHERTHTKTRFSENAKCIHTKFQVFKHQRTQKIEKPHACIECEQTFLRKSQLIYHENICIQENPGSGQCEKLSRSVLFTKHLKTNTTDKICIPNEYRKGSTVKSSLITHQQTHTEEKSYMCSECGKGFTMKRYLIAHQRTHSGEKPYVCKECGKGFTVKSNLIVHQRTHTGEKPYICSECGKGFTMKRYLVVHQRTHTGEKPYMCSECGKGFTVKSNLIVHQRSHTGEKSYICSECGKGFTVKRTLVIHQRTHTGEKSYICNECGKGFTTKRTLIIHQRTHTGEKPYECNECGKAFSQKICLIQHERCHTGKTPFVCTECGKSYSHKYGLITHQRIHTGEKPYECNECGKAFTTKSVLNVHQRTHTGERPYGCSDCEKAFSHLSNLVKHKKMHTREMGRISQVENSCNGESQLLPYK</sequence>
<proteinExistence type="evidence at protein level"/>
<reference key="1">
    <citation type="journal article" date="2004" name="Nat. Genet.">
        <title>Complete sequencing and characterization of 21,243 full-length human cDNAs.</title>
        <authorList>
            <person name="Ota T."/>
            <person name="Suzuki Y."/>
            <person name="Nishikawa T."/>
            <person name="Otsuki T."/>
            <person name="Sugiyama T."/>
            <person name="Irie R."/>
            <person name="Wakamatsu A."/>
            <person name="Hayashi K."/>
            <person name="Sato H."/>
            <person name="Nagai K."/>
            <person name="Kimura K."/>
            <person name="Makita H."/>
            <person name="Sekine M."/>
            <person name="Obayashi M."/>
            <person name="Nishi T."/>
            <person name="Shibahara T."/>
            <person name="Tanaka T."/>
            <person name="Ishii S."/>
            <person name="Yamamoto J."/>
            <person name="Saito K."/>
            <person name="Kawai Y."/>
            <person name="Isono Y."/>
            <person name="Nakamura Y."/>
            <person name="Nagahari K."/>
            <person name="Murakami K."/>
            <person name="Yasuda T."/>
            <person name="Iwayanagi T."/>
            <person name="Wagatsuma M."/>
            <person name="Shiratori A."/>
            <person name="Sudo H."/>
            <person name="Hosoiri T."/>
            <person name="Kaku Y."/>
            <person name="Kodaira H."/>
            <person name="Kondo H."/>
            <person name="Sugawara M."/>
            <person name="Takahashi M."/>
            <person name="Kanda K."/>
            <person name="Yokoi T."/>
            <person name="Furuya T."/>
            <person name="Kikkawa E."/>
            <person name="Omura Y."/>
            <person name="Abe K."/>
            <person name="Kamihara K."/>
            <person name="Katsuta N."/>
            <person name="Sato K."/>
            <person name="Tanikawa M."/>
            <person name="Yamazaki M."/>
            <person name="Ninomiya K."/>
            <person name="Ishibashi T."/>
            <person name="Yamashita H."/>
            <person name="Murakawa K."/>
            <person name="Fujimori K."/>
            <person name="Tanai H."/>
            <person name="Kimata M."/>
            <person name="Watanabe M."/>
            <person name="Hiraoka S."/>
            <person name="Chiba Y."/>
            <person name="Ishida S."/>
            <person name="Ono Y."/>
            <person name="Takiguchi S."/>
            <person name="Watanabe S."/>
            <person name="Yosida M."/>
            <person name="Hotuta T."/>
            <person name="Kusano J."/>
            <person name="Kanehori K."/>
            <person name="Takahashi-Fujii A."/>
            <person name="Hara H."/>
            <person name="Tanase T.-O."/>
            <person name="Nomura Y."/>
            <person name="Togiya S."/>
            <person name="Komai F."/>
            <person name="Hara R."/>
            <person name="Takeuchi K."/>
            <person name="Arita M."/>
            <person name="Imose N."/>
            <person name="Musashino K."/>
            <person name="Yuuki H."/>
            <person name="Oshima A."/>
            <person name="Sasaki N."/>
            <person name="Aotsuka S."/>
            <person name="Yoshikawa Y."/>
            <person name="Matsunawa H."/>
            <person name="Ichihara T."/>
            <person name="Shiohata N."/>
            <person name="Sano S."/>
            <person name="Moriya S."/>
            <person name="Momiyama H."/>
            <person name="Satoh N."/>
            <person name="Takami S."/>
            <person name="Terashima Y."/>
            <person name="Suzuki O."/>
            <person name="Nakagawa S."/>
            <person name="Senoh A."/>
            <person name="Mizoguchi H."/>
            <person name="Goto Y."/>
            <person name="Shimizu F."/>
            <person name="Wakebe H."/>
            <person name="Hishigaki H."/>
            <person name="Watanabe T."/>
            <person name="Sugiyama A."/>
            <person name="Takemoto M."/>
            <person name="Kawakami B."/>
            <person name="Yamazaki M."/>
            <person name="Watanabe K."/>
            <person name="Kumagai A."/>
            <person name="Itakura S."/>
            <person name="Fukuzumi Y."/>
            <person name="Fujimori Y."/>
            <person name="Komiyama M."/>
            <person name="Tashiro H."/>
            <person name="Tanigami A."/>
            <person name="Fujiwara T."/>
            <person name="Ono T."/>
            <person name="Yamada K."/>
            <person name="Fujii Y."/>
            <person name="Ozaki K."/>
            <person name="Hirao M."/>
            <person name="Ohmori Y."/>
            <person name="Kawabata A."/>
            <person name="Hikiji T."/>
            <person name="Kobatake N."/>
            <person name="Inagaki H."/>
            <person name="Ikema Y."/>
            <person name="Okamoto S."/>
            <person name="Okitani R."/>
            <person name="Kawakami T."/>
            <person name="Noguchi S."/>
            <person name="Itoh T."/>
            <person name="Shigeta K."/>
            <person name="Senba T."/>
            <person name="Matsumura K."/>
            <person name="Nakajima Y."/>
            <person name="Mizuno T."/>
            <person name="Morinaga M."/>
            <person name="Sasaki M."/>
            <person name="Togashi T."/>
            <person name="Oyama M."/>
            <person name="Hata H."/>
            <person name="Watanabe M."/>
            <person name="Komatsu T."/>
            <person name="Mizushima-Sugano J."/>
            <person name="Satoh T."/>
            <person name="Shirai Y."/>
            <person name="Takahashi Y."/>
            <person name="Nakagawa K."/>
            <person name="Okumura K."/>
            <person name="Nagase T."/>
            <person name="Nomura N."/>
            <person name="Kikuchi H."/>
            <person name="Masuho Y."/>
            <person name="Yamashita R."/>
            <person name="Nakai K."/>
            <person name="Yada T."/>
            <person name="Nakamura Y."/>
            <person name="Ohara O."/>
            <person name="Isogai T."/>
            <person name="Sugano S."/>
        </authorList>
    </citation>
    <scope>NUCLEOTIDE SEQUENCE [LARGE SCALE MRNA] (ISOFORM 1)</scope>
    <source>
        <tissue>Spleen</tissue>
    </source>
</reference>
<reference key="2">
    <citation type="journal article" date="2004" name="Nature">
        <title>The DNA sequence and biology of human chromosome 19.</title>
        <authorList>
            <person name="Grimwood J."/>
            <person name="Gordon L.A."/>
            <person name="Olsen A.S."/>
            <person name="Terry A."/>
            <person name="Schmutz J."/>
            <person name="Lamerdin J.E."/>
            <person name="Hellsten U."/>
            <person name="Goodstein D."/>
            <person name="Couronne O."/>
            <person name="Tran-Gyamfi M."/>
            <person name="Aerts A."/>
            <person name="Altherr M."/>
            <person name="Ashworth L."/>
            <person name="Bajorek E."/>
            <person name="Black S."/>
            <person name="Branscomb E."/>
            <person name="Caenepeel S."/>
            <person name="Carrano A.V."/>
            <person name="Caoile C."/>
            <person name="Chan Y.M."/>
            <person name="Christensen M."/>
            <person name="Cleland C.A."/>
            <person name="Copeland A."/>
            <person name="Dalin E."/>
            <person name="Dehal P."/>
            <person name="Denys M."/>
            <person name="Detter J.C."/>
            <person name="Escobar J."/>
            <person name="Flowers D."/>
            <person name="Fotopulos D."/>
            <person name="Garcia C."/>
            <person name="Georgescu A.M."/>
            <person name="Glavina T."/>
            <person name="Gomez M."/>
            <person name="Gonzales E."/>
            <person name="Groza M."/>
            <person name="Hammon N."/>
            <person name="Hawkins T."/>
            <person name="Haydu L."/>
            <person name="Ho I."/>
            <person name="Huang W."/>
            <person name="Israni S."/>
            <person name="Jett J."/>
            <person name="Kadner K."/>
            <person name="Kimball H."/>
            <person name="Kobayashi A."/>
            <person name="Larionov V."/>
            <person name="Leem S.-H."/>
            <person name="Lopez F."/>
            <person name="Lou Y."/>
            <person name="Lowry S."/>
            <person name="Malfatti S."/>
            <person name="Martinez D."/>
            <person name="McCready P.M."/>
            <person name="Medina C."/>
            <person name="Morgan J."/>
            <person name="Nelson K."/>
            <person name="Nolan M."/>
            <person name="Ovcharenko I."/>
            <person name="Pitluck S."/>
            <person name="Pollard M."/>
            <person name="Popkie A.P."/>
            <person name="Predki P."/>
            <person name="Quan G."/>
            <person name="Ramirez L."/>
            <person name="Rash S."/>
            <person name="Retterer J."/>
            <person name="Rodriguez A."/>
            <person name="Rogers S."/>
            <person name="Salamov A."/>
            <person name="Salazar A."/>
            <person name="She X."/>
            <person name="Smith D."/>
            <person name="Slezak T."/>
            <person name="Solovyev V."/>
            <person name="Thayer N."/>
            <person name="Tice H."/>
            <person name="Tsai M."/>
            <person name="Ustaszewska A."/>
            <person name="Vo N."/>
            <person name="Wagner M."/>
            <person name="Wheeler J."/>
            <person name="Wu K."/>
            <person name="Xie G."/>
            <person name="Yang J."/>
            <person name="Dubchak I."/>
            <person name="Furey T.S."/>
            <person name="DeJong P."/>
            <person name="Dickson M."/>
            <person name="Gordon D."/>
            <person name="Eichler E.E."/>
            <person name="Pennacchio L.A."/>
            <person name="Richardson P."/>
            <person name="Stubbs L."/>
            <person name="Rokhsar D.S."/>
            <person name="Myers R.M."/>
            <person name="Rubin E.M."/>
            <person name="Lucas S.M."/>
        </authorList>
    </citation>
    <scope>NUCLEOTIDE SEQUENCE [LARGE SCALE GENOMIC DNA]</scope>
</reference>
<reference key="3">
    <citation type="submission" date="2005-09" db="EMBL/GenBank/DDBJ databases">
        <authorList>
            <person name="Mural R.J."/>
            <person name="Istrail S."/>
            <person name="Sutton G."/>
            <person name="Florea L."/>
            <person name="Halpern A.L."/>
            <person name="Mobarry C.M."/>
            <person name="Lippert R."/>
            <person name="Walenz B."/>
            <person name="Shatkay H."/>
            <person name="Dew I."/>
            <person name="Miller J.R."/>
            <person name="Flanigan M.J."/>
            <person name="Edwards N.J."/>
            <person name="Bolanos R."/>
            <person name="Fasulo D."/>
            <person name="Halldorsson B.V."/>
            <person name="Hannenhalli S."/>
            <person name="Turner R."/>
            <person name="Yooseph S."/>
            <person name="Lu F."/>
            <person name="Nusskern D.R."/>
            <person name="Shue B.C."/>
            <person name="Zheng X.H."/>
            <person name="Zhong F."/>
            <person name="Delcher A.L."/>
            <person name="Huson D.H."/>
            <person name="Kravitz S.A."/>
            <person name="Mouchard L."/>
            <person name="Reinert K."/>
            <person name="Remington K.A."/>
            <person name="Clark A.G."/>
            <person name="Waterman M.S."/>
            <person name="Eichler E.E."/>
            <person name="Adams M.D."/>
            <person name="Hunkapiller M.W."/>
            <person name="Myers E.W."/>
            <person name="Venter J.C."/>
        </authorList>
    </citation>
    <scope>NUCLEOTIDE SEQUENCE [LARGE SCALE GENOMIC DNA]</scope>
</reference>
<reference key="4">
    <citation type="journal article" date="2004" name="Genome Res.">
        <title>The status, quality, and expansion of the NIH full-length cDNA project: the Mammalian Gene Collection (MGC).</title>
        <authorList>
            <consortium name="The MGC Project Team"/>
        </authorList>
    </citation>
    <scope>NUCLEOTIDE SEQUENCE [LARGE SCALE MRNA] (ISOFORMS 1 AND 2)</scope>
    <source>
        <tissue>Placenta</tissue>
        <tissue>Uterus</tissue>
    </source>
</reference>
<evidence type="ECO:0000255" key="1">
    <source>
        <dbReference type="PROSITE-ProRule" id="PRU00042"/>
    </source>
</evidence>
<evidence type="ECO:0000255" key="2">
    <source>
        <dbReference type="PROSITE-ProRule" id="PRU00119"/>
    </source>
</evidence>
<evidence type="ECO:0000303" key="3">
    <source>
    </source>
</evidence>
<evidence type="ECO:0000305" key="4"/>
<keyword id="KW-0025">Alternative splicing</keyword>
<keyword id="KW-0238">DNA-binding</keyword>
<keyword id="KW-0479">Metal-binding</keyword>
<keyword id="KW-0539">Nucleus</keyword>
<keyword id="KW-1267">Proteomics identification</keyword>
<keyword id="KW-1185">Reference proteome</keyword>
<keyword id="KW-0677">Repeat</keyword>
<keyword id="KW-0804">Transcription</keyword>
<keyword id="KW-0805">Transcription regulation</keyword>
<keyword id="KW-0862">Zinc</keyword>
<keyword id="KW-0863">Zinc-finger</keyword>
<organism>
    <name type="scientific">Homo sapiens</name>
    <name type="common">Human</name>
    <dbReference type="NCBI Taxonomy" id="9606"/>
    <lineage>
        <taxon>Eukaryota</taxon>
        <taxon>Metazoa</taxon>
        <taxon>Chordata</taxon>
        <taxon>Craniata</taxon>
        <taxon>Vertebrata</taxon>
        <taxon>Euteleostomi</taxon>
        <taxon>Mammalia</taxon>
        <taxon>Eutheria</taxon>
        <taxon>Euarchontoglires</taxon>
        <taxon>Primates</taxon>
        <taxon>Haplorrhini</taxon>
        <taxon>Catarrhini</taxon>
        <taxon>Hominidae</taxon>
        <taxon>Homo</taxon>
    </lineage>
</organism>
<gene>
    <name type="primary">ZNF614</name>
</gene>